<organism>
    <name type="scientific">Staphylococcus carnosus (strain TM300)</name>
    <dbReference type="NCBI Taxonomy" id="396513"/>
    <lineage>
        <taxon>Bacteria</taxon>
        <taxon>Bacillati</taxon>
        <taxon>Bacillota</taxon>
        <taxon>Bacilli</taxon>
        <taxon>Bacillales</taxon>
        <taxon>Staphylococcaceae</taxon>
        <taxon>Staphylococcus</taxon>
    </lineage>
</organism>
<name>Y1399_STACT</name>
<dbReference type="EC" id="2.1.1.-" evidence="1"/>
<dbReference type="EMBL" id="AM295250">
    <property type="protein sequence ID" value="CAL28304.1"/>
    <property type="molecule type" value="Genomic_DNA"/>
</dbReference>
<dbReference type="RefSeq" id="WP_015900644.1">
    <property type="nucleotide sequence ID" value="NC_012121.1"/>
</dbReference>
<dbReference type="SMR" id="B9DN09"/>
<dbReference type="GeneID" id="93793824"/>
<dbReference type="KEGG" id="sca:SCA_1399"/>
<dbReference type="eggNOG" id="COG0030">
    <property type="taxonomic scope" value="Bacteria"/>
</dbReference>
<dbReference type="HOGENOM" id="CLU_111961_0_0_9"/>
<dbReference type="OrthoDB" id="465705at2"/>
<dbReference type="BioCyc" id="SCAR396513:SCA_RS06990-MONOMER"/>
<dbReference type="Proteomes" id="UP000000444">
    <property type="component" value="Chromosome"/>
</dbReference>
<dbReference type="GO" id="GO:0008757">
    <property type="term" value="F:S-adenosylmethionine-dependent methyltransferase activity"/>
    <property type="evidence" value="ECO:0007669"/>
    <property type="project" value="UniProtKB-UniRule"/>
</dbReference>
<dbReference type="GO" id="GO:0032259">
    <property type="term" value="P:methylation"/>
    <property type="evidence" value="ECO:0007669"/>
    <property type="project" value="UniProtKB-KW"/>
</dbReference>
<dbReference type="CDD" id="cd02440">
    <property type="entry name" value="AdoMet_MTases"/>
    <property type="match status" value="1"/>
</dbReference>
<dbReference type="Gene3D" id="3.40.50.150">
    <property type="entry name" value="Vaccinia Virus protein VP39"/>
    <property type="match status" value="1"/>
</dbReference>
<dbReference type="HAMAP" id="MF_02100">
    <property type="entry name" value="Methyltr_YrrT"/>
    <property type="match status" value="1"/>
</dbReference>
<dbReference type="InterPro" id="IPR041698">
    <property type="entry name" value="Methyltransf_25"/>
</dbReference>
<dbReference type="InterPro" id="IPR029063">
    <property type="entry name" value="SAM-dependent_MTases_sf"/>
</dbReference>
<dbReference type="InterPro" id="IPR023553">
    <property type="entry name" value="Uncharacterised_MeTfrase_YrrT"/>
</dbReference>
<dbReference type="PANTHER" id="PTHR43861:SF1">
    <property type="entry name" value="TRANS-ACONITATE 2-METHYLTRANSFERASE"/>
    <property type="match status" value="1"/>
</dbReference>
<dbReference type="PANTHER" id="PTHR43861">
    <property type="entry name" value="TRANS-ACONITATE 2-METHYLTRANSFERASE-RELATED"/>
    <property type="match status" value="1"/>
</dbReference>
<dbReference type="Pfam" id="PF13649">
    <property type="entry name" value="Methyltransf_25"/>
    <property type="match status" value="1"/>
</dbReference>
<dbReference type="SUPFAM" id="SSF53335">
    <property type="entry name" value="S-adenosyl-L-methionine-dependent methyltransferases"/>
    <property type="match status" value="1"/>
</dbReference>
<accession>B9DN09</accession>
<gene>
    <name type="ordered locus">Sca_1399</name>
</gene>
<sequence length="207" mass="24118">MEFMEIFKKWAPEYDATVNGENEEYRDVFINYSEMLNELASTAEGRVLEIGAGTGNLTLMLKDKGREVSAIDPSDDMRAIANETKNLDVQYGHFFDIPFDQPFDYIVTSFAFHHVKPEEKSDAIKTMMHSLTDDGKLLILDTMFESEKYKQDLIKYYNNQEFYNLTEDLQTEYYTYIENLKDIVNDLGLNLDMVQKNKFAWLATISK</sequence>
<keyword id="KW-0489">Methyltransferase</keyword>
<keyword id="KW-1185">Reference proteome</keyword>
<keyword id="KW-0949">S-adenosyl-L-methionine</keyword>
<keyword id="KW-0808">Transferase</keyword>
<protein>
    <recommendedName>
        <fullName evidence="1">Uncharacterized methyltransferase Sca_1399</fullName>
        <ecNumber evidence="1">2.1.1.-</ecNumber>
    </recommendedName>
</protein>
<proteinExistence type="inferred from homology"/>
<comment type="function">
    <text evidence="1">Could be a S-adenosyl-L-methionine-dependent methyltransferase.</text>
</comment>
<comment type="similarity">
    <text evidence="1">Belongs to the methyltransferase superfamily. YrrT family.</text>
</comment>
<feature type="chain" id="PRO_0000373857" description="Uncharacterized methyltransferase Sca_1399">
    <location>
        <begin position="1"/>
        <end position="207"/>
    </location>
</feature>
<feature type="binding site" evidence="1">
    <location>
        <position position="51"/>
    </location>
    <ligand>
        <name>S-adenosyl-L-methionine</name>
        <dbReference type="ChEBI" id="CHEBI:59789"/>
    </ligand>
</feature>
<feature type="binding site" evidence="1">
    <location>
        <position position="72"/>
    </location>
    <ligand>
        <name>S-adenosyl-L-methionine</name>
        <dbReference type="ChEBI" id="CHEBI:59789"/>
    </ligand>
</feature>
<reference key="1">
    <citation type="journal article" date="2009" name="Appl. Environ. Microbiol.">
        <title>Genome analysis of the meat starter culture bacterium Staphylococcus carnosus TM300.</title>
        <authorList>
            <person name="Rosenstein R."/>
            <person name="Nerz C."/>
            <person name="Biswas L."/>
            <person name="Resch A."/>
            <person name="Raddatz G."/>
            <person name="Schuster S.C."/>
            <person name="Goetz F."/>
        </authorList>
    </citation>
    <scope>NUCLEOTIDE SEQUENCE [LARGE SCALE GENOMIC DNA]</scope>
    <source>
        <strain>TM300</strain>
    </source>
</reference>
<evidence type="ECO:0000255" key="1">
    <source>
        <dbReference type="HAMAP-Rule" id="MF_02100"/>
    </source>
</evidence>